<name>RR5_PYRYE</name>
<keyword id="KW-0150">Chloroplast</keyword>
<keyword id="KW-0934">Plastid</keyword>
<keyword id="KW-0687">Ribonucleoprotein</keyword>
<keyword id="KW-0689">Ribosomal protein</keyword>
<keyword id="KW-0694">RNA-binding</keyword>
<keyword id="KW-0699">rRNA-binding</keyword>
<protein>
    <recommendedName>
        <fullName evidence="2">Small ribosomal subunit protein uS5c</fullName>
    </recommendedName>
    <alternativeName>
        <fullName>30S ribosomal protein S5, chloroplastic</fullName>
    </alternativeName>
</protein>
<comment type="function">
    <text evidence="1">With S4 and S12 plays an important role in translational accuracy.</text>
</comment>
<comment type="subunit">
    <text evidence="1">Part of the 30S ribosomal subunit. Contacts protein S4 (By similarity).</text>
</comment>
<comment type="subcellular location">
    <subcellularLocation>
        <location>Plastid</location>
        <location>Chloroplast</location>
    </subcellularLocation>
</comment>
<comment type="domain">
    <text>The N-terminal domain interacts with the head of the 30S subunit; the C-terminal domain interacts with the body and contacts protein S4. The interaction surface between S4 and S5 is involved in control of translational fidelity.</text>
</comment>
<comment type="similarity">
    <text evidence="2">Belongs to the universal ribosomal protein uS5 family.</text>
</comment>
<evidence type="ECO:0000250" key="1"/>
<evidence type="ECO:0000305" key="2"/>
<geneLocation type="chloroplast"/>
<dbReference type="EMBL" id="DQ995188">
    <property type="protein sequence ID" value="ABJ91303.1"/>
    <property type="molecule type" value="Genomic_DNA"/>
</dbReference>
<dbReference type="EMBL" id="AP006715">
    <property type="protein sequence ID" value="BAE92421.1"/>
    <property type="molecule type" value="Genomic_DNA"/>
</dbReference>
<dbReference type="RefSeq" id="YP_536978.1">
    <property type="nucleotide sequence ID" value="NC_007932.1"/>
</dbReference>
<dbReference type="SMR" id="Q1XDJ0"/>
<dbReference type="GeneID" id="3978852"/>
<dbReference type="GO" id="GO:0009507">
    <property type="term" value="C:chloroplast"/>
    <property type="evidence" value="ECO:0007669"/>
    <property type="project" value="UniProtKB-SubCell"/>
</dbReference>
<dbReference type="GO" id="GO:0015935">
    <property type="term" value="C:small ribosomal subunit"/>
    <property type="evidence" value="ECO:0007669"/>
    <property type="project" value="InterPro"/>
</dbReference>
<dbReference type="GO" id="GO:0019843">
    <property type="term" value="F:rRNA binding"/>
    <property type="evidence" value="ECO:0007669"/>
    <property type="project" value="UniProtKB-UniRule"/>
</dbReference>
<dbReference type="GO" id="GO:0003735">
    <property type="term" value="F:structural constituent of ribosome"/>
    <property type="evidence" value="ECO:0007669"/>
    <property type="project" value="InterPro"/>
</dbReference>
<dbReference type="GO" id="GO:0006412">
    <property type="term" value="P:translation"/>
    <property type="evidence" value="ECO:0007669"/>
    <property type="project" value="UniProtKB-UniRule"/>
</dbReference>
<dbReference type="FunFam" id="3.30.230.10:FF:000002">
    <property type="entry name" value="30S ribosomal protein S5"/>
    <property type="match status" value="1"/>
</dbReference>
<dbReference type="Gene3D" id="3.30.160.20">
    <property type="match status" value="1"/>
</dbReference>
<dbReference type="Gene3D" id="3.30.230.10">
    <property type="match status" value="1"/>
</dbReference>
<dbReference type="HAMAP" id="MF_01307_B">
    <property type="entry name" value="Ribosomal_uS5_B"/>
    <property type="match status" value="1"/>
</dbReference>
<dbReference type="InterPro" id="IPR020568">
    <property type="entry name" value="Ribosomal_Su5_D2-typ_SF"/>
</dbReference>
<dbReference type="InterPro" id="IPR000851">
    <property type="entry name" value="Ribosomal_uS5"/>
</dbReference>
<dbReference type="InterPro" id="IPR005712">
    <property type="entry name" value="Ribosomal_uS5_bac-type"/>
</dbReference>
<dbReference type="InterPro" id="IPR005324">
    <property type="entry name" value="Ribosomal_uS5_C"/>
</dbReference>
<dbReference type="InterPro" id="IPR013810">
    <property type="entry name" value="Ribosomal_uS5_N"/>
</dbReference>
<dbReference type="InterPro" id="IPR018192">
    <property type="entry name" value="Ribosomal_uS5_N_CS"/>
</dbReference>
<dbReference type="InterPro" id="IPR014721">
    <property type="entry name" value="Ribsml_uS5_D2-typ_fold_subgr"/>
</dbReference>
<dbReference type="NCBIfam" id="TIGR01021">
    <property type="entry name" value="rpsE_bact"/>
    <property type="match status" value="1"/>
</dbReference>
<dbReference type="PANTHER" id="PTHR48277">
    <property type="entry name" value="MITOCHONDRIAL RIBOSOMAL PROTEIN S5"/>
    <property type="match status" value="1"/>
</dbReference>
<dbReference type="PANTHER" id="PTHR48277:SF1">
    <property type="entry name" value="MITOCHONDRIAL RIBOSOMAL PROTEIN S5"/>
    <property type="match status" value="1"/>
</dbReference>
<dbReference type="Pfam" id="PF00333">
    <property type="entry name" value="Ribosomal_S5"/>
    <property type="match status" value="1"/>
</dbReference>
<dbReference type="Pfam" id="PF03719">
    <property type="entry name" value="Ribosomal_S5_C"/>
    <property type="match status" value="1"/>
</dbReference>
<dbReference type="SUPFAM" id="SSF54768">
    <property type="entry name" value="dsRNA-binding domain-like"/>
    <property type="match status" value="1"/>
</dbReference>
<dbReference type="SUPFAM" id="SSF54211">
    <property type="entry name" value="Ribosomal protein S5 domain 2-like"/>
    <property type="match status" value="1"/>
</dbReference>
<dbReference type="PROSITE" id="PS00585">
    <property type="entry name" value="RIBOSOMAL_S5"/>
    <property type="match status" value="1"/>
</dbReference>
<dbReference type="PROSITE" id="PS50881">
    <property type="entry name" value="S5_DSRBD"/>
    <property type="match status" value="1"/>
</dbReference>
<proteinExistence type="inferred from homology"/>
<organism>
    <name type="scientific">Pyropia yezoensis</name>
    <name type="common">Susabi-nori</name>
    <name type="synonym">Porphyra yezoensis</name>
    <dbReference type="NCBI Taxonomy" id="2788"/>
    <lineage>
        <taxon>Eukaryota</taxon>
        <taxon>Rhodophyta</taxon>
        <taxon>Bangiophyceae</taxon>
        <taxon>Bangiales</taxon>
        <taxon>Bangiaceae</taxon>
        <taxon>Pyropia</taxon>
    </lineage>
</organism>
<reference key="1">
    <citation type="submission" date="2006-09" db="EMBL/GenBank/DDBJ databases">
        <title>Cloning and analysis of the Porphyra yezoensis gene for rps5.</title>
        <authorList>
            <person name="Wang M.Q."/>
            <person name="Mao Y.X."/>
        </authorList>
    </citation>
    <scope>NUCLEOTIDE SEQUENCE [GENOMIC DNA]</scope>
    <source>
        <strain>Qingdao</strain>
    </source>
</reference>
<reference key="2">
    <citation type="submission" date="2003-11" db="EMBL/GenBank/DDBJ databases">
        <title>Whole genome sequence of Porphyra yezoensis chloroplast.</title>
        <authorList>
            <person name="Kunimoto M."/>
            <person name="Morishima K."/>
            <person name="Yoshikawa M."/>
            <person name="Fukuda S."/>
            <person name="Kobayashi T."/>
            <person name="Kobayashi M."/>
            <person name="Okazaki T."/>
            <person name="Ohara I."/>
            <person name="Nakayama I."/>
        </authorList>
    </citation>
    <scope>NUCLEOTIDE SEQUENCE [LARGE SCALE GENOMIC DNA]</scope>
    <source>
        <strain>U-51</strain>
    </source>
</reference>
<gene>
    <name type="primary">rps5</name>
</gene>
<accession>Q1XDJ0</accession>
<sequence length="174" mass="18213">MANRKKQSKGKDKDSGWEERVVQVKRVTKVVKGGKKLSFRVILVIGNEQGQVGVGVGKASDVIGAVKKGVTDAKKHLVTVPLTKSNSIPHPINGISGAAKVILRPSAPGSGVIAGGSVRTVLELSGVQNILAKQLGSNNTLNNARAVLNGLTQLRTFSEAAKDRGVPIESLYST</sequence>
<feature type="chain" id="PRO_0000277026" description="Small ribosomal subunit protein uS5c">
    <location>
        <begin position="1"/>
        <end position="174"/>
    </location>
</feature>
<feature type="domain" description="S5 DRBM">
    <location>
        <begin position="17"/>
        <end position="80"/>
    </location>
</feature>